<gene>
    <name evidence="1" type="primary">rpsC</name>
    <name evidence="1" type="synonym">rps3</name>
    <name type="ordered locus">P9215_18241</name>
</gene>
<comment type="function">
    <text evidence="1">Binds the lower part of the 30S subunit head. Binds mRNA in the 70S ribosome, positioning it for translation.</text>
</comment>
<comment type="subunit">
    <text evidence="1">Part of the 30S ribosomal subunit. Forms a tight complex with proteins S10 and S14.</text>
</comment>
<comment type="similarity">
    <text evidence="1">Belongs to the universal ribosomal protein uS3 family.</text>
</comment>
<keyword id="KW-0687">Ribonucleoprotein</keyword>
<keyword id="KW-0689">Ribosomal protein</keyword>
<keyword id="KW-0694">RNA-binding</keyword>
<keyword id="KW-0699">rRNA-binding</keyword>
<accession>A8G756</accession>
<proteinExistence type="inferred from homology"/>
<sequence length="243" mass="27479">MGHKIHPSGLRLGITQEHRSKWFATSKTYPILLQEDFKIRTFIEKKYGAAGISDVLIARKADQLELELKTARPGVIVGRQGSGIEELRSGIQKTIGDRTRQVRINVVEVERVDADAFLLAEYIAQQLEKRVAFRRTIRMALQRAQRAGVLGLKIQVGGRLNGAEIARTEWTREGRVPLHTLRAEIDYATREANTTYGVLGIKVWVFKGEVLPKEEQTIPVGANPKRKASRRPQQFEDRSNENS</sequence>
<protein>
    <recommendedName>
        <fullName evidence="1">Small ribosomal subunit protein uS3</fullName>
    </recommendedName>
    <alternativeName>
        <fullName evidence="3">30S ribosomal protein S3</fullName>
    </alternativeName>
</protein>
<organism>
    <name type="scientific">Prochlorococcus marinus (strain MIT 9215)</name>
    <dbReference type="NCBI Taxonomy" id="93060"/>
    <lineage>
        <taxon>Bacteria</taxon>
        <taxon>Bacillati</taxon>
        <taxon>Cyanobacteriota</taxon>
        <taxon>Cyanophyceae</taxon>
        <taxon>Synechococcales</taxon>
        <taxon>Prochlorococcaceae</taxon>
        <taxon>Prochlorococcus</taxon>
    </lineage>
</organism>
<feature type="chain" id="PRO_1000086143" description="Small ribosomal subunit protein uS3">
    <location>
        <begin position="1"/>
        <end position="243"/>
    </location>
</feature>
<feature type="domain" description="KH type-2" evidence="1">
    <location>
        <begin position="39"/>
        <end position="110"/>
    </location>
</feature>
<feature type="region of interest" description="Disordered" evidence="2">
    <location>
        <begin position="216"/>
        <end position="243"/>
    </location>
</feature>
<feature type="compositionally biased region" description="Basic and acidic residues" evidence="2">
    <location>
        <begin position="233"/>
        <end position="243"/>
    </location>
</feature>
<evidence type="ECO:0000255" key="1">
    <source>
        <dbReference type="HAMAP-Rule" id="MF_01309"/>
    </source>
</evidence>
<evidence type="ECO:0000256" key="2">
    <source>
        <dbReference type="SAM" id="MobiDB-lite"/>
    </source>
</evidence>
<evidence type="ECO:0000305" key="3"/>
<dbReference type="EMBL" id="CP000825">
    <property type="protein sequence ID" value="ABV51437.1"/>
    <property type="molecule type" value="Genomic_DNA"/>
</dbReference>
<dbReference type="RefSeq" id="WP_012008443.1">
    <property type="nucleotide sequence ID" value="NC_009840.1"/>
</dbReference>
<dbReference type="SMR" id="A8G756"/>
<dbReference type="STRING" id="93060.P9215_18241"/>
<dbReference type="KEGG" id="pmh:P9215_18241"/>
<dbReference type="eggNOG" id="COG0092">
    <property type="taxonomic scope" value="Bacteria"/>
</dbReference>
<dbReference type="HOGENOM" id="CLU_058591_0_2_3"/>
<dbReference type="OrthoDB" id="9806396at2"/>
<dbReference type="Proteomes" id="UP000002014">
    <property type="component" value="Chromosome"/>
</dbReference>
<dbReference type="GO" id="GO:0022627">
    <property type="term" value="C:cytosolic small ribosomal subunit"/>
    <property type="evidence" value="ECO:0007669"/>
    <property type="project" value="TreeGrafter"/>
</dbReference>
<dbReference type="GO" id="GO:0003729">
    <property type="term" value="F:mRNA binding"/>
    <property type="evidence" value="ECO:0007669"/>
    <property type="project" value="UniProtKB-UniRule"/>
</dbReference>
<dbReference type="GO" id="GO:0019843">
    <property type="term" value="F:rRNA binding"/>
    <property type="evidence" value="ECO:0007669"/>
    <property type="project" value="UniProtKB-UniRule"/>
</dbReference>
<dbReference type="GO" id="GO:0003735">
    <property type="term" value="F:structural constituent of ribosome"/>
    <property type="evidence" value="ECO:0007669"/>
    <property type="project" value="InterPro"/>
</dbReference>
<dbReference type="GO" id="GO:0006412">
    <property type="term" value="P:translation"/>
    <property type="evidence" value="ECO:0007669"/>
    <property type="project" value="UniProtKB-UniRule"/>
</dbReference>
<dbReference type="CDD" id="cd02412">
    <property type="entry name" value="KH-II_30S_S3"/>
    <property type="match status" value="1"/>
</dbReference>
<dbReference type="FunFam" id="3.30.300.20:FF:000001">
    <property type="entry name" value="30S ribosomal protein S3"/>
    <property type="match status" value="1"/>
</dbReference>
<dbReference type="Gene3D" id="3.30.300.20">
    <property type="match status" value="1"/>
</dbReference>
<dbReference type="Gene3D" id="3.30.1140.32">
    <property type="entry name" value="Ribosomal protein S3, C-terminal domain"/>
    <property type="match status" value="1"/>
</dbReference>
<dbReference type="HAMAP" id="MF_01309_B">
    <property type="entry name" value="Ribosomal_uS3_B"/>
    <property type="match status" value="1"/>
</dbReference>
<dbReference type="InterPro" id="IPR004087">
    <property type="entry name" value="KH_dom"/>
</dbReference>
<dbReference type="InterPro" id="IPR015946">
    <property type="entry name" value="KH_dom-like_a/b"/>
</dbReference>
<dbReference type="InterPro" id="IPR004044">
    <property type="entry name" value="KH_dom_type_2"/>
</dbReference>
<dbReference type="InterPro" id="IPR009019">
    <property type="entry name" value="KH_sf_prok-type"/>
</dbReference>
<dbReference type="InterPro" id="IPR036419">
    <property type="entry name" value="Ribosomal_S3_C_sf"/>
</dbReference>
<dbReference type="InterPro" id="IPR005704">
    <property type="entry name" value="Ribosomal_uS3_bac-typ"/>
</dbReference>
<dbReference type="InterPro" id="IPR001351">
    <property type="entry name" value="Ribosomal_uS3_C"/>
</dbReference>
<dbReference type="InterPro" id="IPR018280">
    <property type="entry name" value="Ribosomal_uS3_CS"/>
</dbReference>
<dbReference type="NCBIfam" id="TIGR01009">
    <property type="entry name" value="rpsC_bact"/>
    <property type="match status" value="1"/>
</dbReference>
<dbReference type="PANTHER" id="PTHR11760">
    <property type="entry name" value="30S/40S RIBOSOMAL PROTEIN S3"/>
    <property type="match status" value="1"/>
</dbReference>
<dbReference type="PANTHER" id="PTHR11760:SF19">
    <property type="entry name" value="SMALL RIBOSOMAL SUBUNIT PROTEIN US3C"/>
    <property type="match status" value="1"/>
</dbReference>
<dbReference type="Pfam" id="PF07650">
    <property type="entry name" value="KH_2"/>
    <property type="match status" value="1"/>
</dbReference>
<dbReference type="Pfam" id="PF00189">
    <property type="entry name" value="Ribosomal_S3_C"/>
    <property type="match status" value="1"/>
</dbReference>
<dbReference type="SMART" id="SM00322">
    <property type="entry name" value="KH"/>
    <property type="match status" value="1"/>
</dbReference>
<dbReference type="SUPFAM" id="SSF54814">
    <property type="entry name" value="Prokaryotic type KH domain (KH-domain type II)"/>
    <property type="match status" value="1"/>
</dbReference>
<dbReference type="SUPFAM" id="SSF54821">
    <property type="entry name" value="Ribosomal protein S3 C-terminal domain"/>
    <property type="match status" value="1"/>
</dbReference>
<dbReference type="PROSITE" id="PS50823">
    <property type="entry name" value="KH_TYPE_2"/>
    <property type="match status" value="1"/>
</dbReference>
<dbReference type="PROSITE" id="PS00548">
    <property type="entry name" value="RIBOSOMAL_S3"/>
    <property type="match status" value="1"/>
</dbReference>
<reference key="1">
    <citation type="journal article" date="2007" name="PLoS Genet.">
        <title>Patterns and implications of gene gain and loss in the evolution of Prochlorococcus.</title>
        <authorList>
            <person name="Kettler G.C."/>
            <person name="Martiny A.C."/>
            <person name="Huang K."/>
            <person name="Zucker J."/>
            <person name="Coleman M.L."/>
            <person name="Rodrigue S."/>
            <person name="Chen F."/>
            <person name="Lapidus A."/>
            <person name="Ferriera S."/>
            <person name="Johnson J."/>
            <person name="Steglich C."/>
            <person name="Church G.M."/>
            <person name="Richardson P."/>
            <person name="Chisholm S.W."/>
        </authorList>
    </citation>
    <scope>NUCLEOTIDE SEQUENCE [LARGE SCALE GENOMIC DNA]</scope>
    <source>
        <strain>MIT 9215</strain>
    </source>
</reference>
<name>RS3_PROM2</name>